<name>EFTU_MYCPN</name>
<feature type="chain" id="PRO_0000091350" description="Elongation factor Tu">
    <location>
        <begin position="1"/>
        <end position="394"/>
    </location>
</feature>
<feature type="domain" description="tr-type G">
    <location>
        <begin position="10"/>
        <end position="204"/>
    </location>
</feature>
<feature type="region of interest" description="G1" evidence="1">
    <location>
        <begin position="19"/>
        <end position="26"/>
    </location>
</feature>
<feature type="region of interest" description="G2" evidence="1">
    <location>
        <begin position="60"/>
        <end position="64"/>
    </location>
</feature>
<feature type="region of interest" description="G3" evidence="1">
    <location>
        <begin position="81"/>
        <end position="84"/>
    </location>
</feature>
<feature type="region of interest" description="G4" evidence="1">
    <location>
        <begin position="136"/>
        <end position="139"/>
    </location>
</feature>
<feature type="region of interest" description="G5" evidence="1">
    <location>
        <begin position="174"/>
        <end position="176"/>
    </location>
</feature>
<feature type="binding site" evidence="2">
    <location>
        <begin position="19"/>
        <end position="26"/>
    </location>
    <ligand>
        <name>GTP</name>
        <dbReference type="ChEBI" id="CHEBI:37565"/>
    </ligand>
</feature>
<feature type="binding site" evidence="2">
    <location>
        <position position="26"/>
    </location>
    <ligand>
        <name>Mg(2+)</name>
        <dbReference type="ChEBI" id="CHEBI:18420"/>
    </ligand>
</feature>
<feature type="binding site" evidence="2">
    <location>
        <begin position="81"/>
        <end position="85"/>
    </location>
    <ligand>
        <name>GTP</name>
        <dbReference type="ChEBI" id="CHEBI:37565"/>
    </ligand>
</feature>
<feature type="binding site" evidence="2">
    <location>
        <begin position="136"/>
        <end position="139"/>
    </location>
    <ligand>
        <name>GTP</name>
        <dbReference type="ChEBI" id="CHEBI:37565"/>
    </ligand>
</feature>
<feature type="sequence conflict" description="In Ref. 1; CAA39292." evidence="3" ref="1">
    <original>HV</original>
    <variation>QL</variation>
    <location>
        <begin position="12"/>
        <end position="13"/>
    </location>
</feature>
<feature type="sequence conflict" description="In Ref. 1; CAA39292." evidence="3" ref="1">
    <original>S</original>
    <variation>I</variation>
    <location>
        <position position="65"/>
    </location>
</feature>
<feature type="sequence conflict" description="In Ref. 1; CAA39292." evidence="3" ref="1">
    <original>L</original>
    <variation>V</variation>
    <location>
        <position position="122"/>
    </location>
</feature>
<feature type="sequence conflict" description="In Ref. 1; CAA39292." evidence="3" ref="1">
    <original>N</original>
    <variation>F</variation>
    <location>
        <position position="136"/>
    </location>
</feature>
<feature type="sequence conflict" description="In Ref. 1; CAA39292." evidence="3" ref="1">
    <original>EWIPTPEREVDK</original>
    <variation>DGFQLLNVKWTN</variation>
    <location>
        <begin position="198"/>
        <end position="209"/>
    </location>
</feature>
<feature type="sequence conflict" description="In Ref. 1; CAA39292." evidence="3" ref="1">
    <original>E</original>
    <variation>V</variation>
    <location>
        <position position="265"/>
    </location>
</feature>
<feature type="sequence conflict" description="In Ref. 1; CAA39292." evidence="3" ref="1">
    <original>T</original>
    <variation>S</variation>
    <location>
        <position position="360"/>
    </location>
</feature>
<feature type="sequence conflict" description="In Ref. 1; CAA39292." evidence="3" ref="1">
    <original>EVLE</original>
    <variation>KCLNSESRILSWLC</variation>
    <location>
        <begin position="391"/>
        <end position="394"/>
    </location>
</feature>
<evidence type="ECO:0000250" key="1"/>
<evidence type="ECO:0000255" key="2">
    <source>
        <dbReference type="HAMAP-Rule" id="MF_00118"/>
    </source>
</evidence>
<evidence type="ECO:0000305" key="3"/>
<protein>
    <recommendedName>
        <fullName evidence="2">Elongation factor Tu</fullName>
        <shortName evidence="2">EF-Tu</shortName>
        <ecNumber evidence="2">3.6.5.3</ecNumber>
    </recommendedName>
</protein>
<dbReference type="EC" id="3.6.5.3" evidence="2"/>
<dbReference type="EMBL" id="X55768">
    <property type="protein sequence ID" value="CAA39292.1"/>
    <property type="molecule type" value="Genomic_DNA"/>
</dbReference>
<dbReference type="EMBL" id="U00089">
    <property type="protein sequence ID" value="AAB95825.1"/>
    <property type="molecule type" value="Genomic_DNA"/>
</dbReference>
<dbReference type="PIR" id="S73503">
    <property type="entry name" value="S73503"/>
</dbReference>
<dbReference type="RefSeq" id="NP_110354.1">
    <property type="nucleotide sequence ID" value="NC_000912.1"/>
</dbReference>
<dbReference type="RefSeq" id="WP_010875022.1">
    <property type="nucleotide sequence ID" value="NZ_OU342337.1"/>
</dbReference>
<dbReference type="PDB" id="7PAJ">
    <property type="method" value="EM"/>
    <property type="resolution" value="7.30 A"/>
    <property type="chains" value="9=1-394"/>
</dbReference>
<dbReference type="PDB" id="7PAK">
    <property type="method" value="EM"/>
    <property type="resolution" value="5.30 A"/>
    <property type="chains" value="9=1-394"/>
</dbReference>
<dbReference type="PDB" id="7PHA">
    <property type="method" value="EM"/>
    <property type="resolution" value="8.50 A"/>
    <property type="chains" value="9=1-394"/>
</dbReference>
<dbReference type="PDB" id="7PI9">
    <property type="method" value="EM"/>
    <property type="resolution" value="6.30 A"/>
    <property type="chains" value="9=1-394"/>
</dbReference>
<dbReference type="PDB" id="7PIP">
    <property type="method" value="EM"/>
    <property type="resolution" value="9.30 A"/>
    <property type="chains" value="9=1-394"/>
</dbReference>
<dbReference type="PDBsum" id="7PAJ"/>
<dbReference type="PDBsum" id="7PAK"/>
<dbReference type="PDBsum" id="7PHA"/>
<dbReference type="PDBsum" id="7PI9"/>
<dbReference type="PDBsum" id="7PIP"/>
<dbReference type="EMDB" id="EMD-13274"/>
<dbReference type="EMDB" id="EMD-13275"/>
<dbReference type="EMDB" id="EMD-13411"/>
<dbReference type="EMDB" id="EMD-13433"/>
<dbReference type="EMDB" id="EMD-13446"/>
<dbReference type="SMR" id="P23568"/>
<dbReference type="IntAct" id="P23568">
    <property type="interactions" value="22"/>
</dbReference>
<dbReference type="STRING" id="272634.MPN_665"/>
<dbReference type="MoonProt" id="P23568"/>
<dbReference type="EnsemblBacteria" id="AAB95825">
    <property type="protein sequence ID" value="AAB95825"/>
    <property type="gene ID" value="MPN_665"/>
</dbReference>
<dbReference type="GeneID" id="66608647"/>
<dbReference type="KEGG" id="mpn:MPN_665"/>
<dbReference type="PATRIC" id="fig|272634.6.peg.730"/>
<dbReference type="HOGENOM" id="CLU_007265_0_1_14"/>
<dbReference type="OrthoDB" id="9804504at2"/>
<dbReference type="BioCyc" id="MPNE272634:G1GJ3-1066-MONOMER"/>
<dbReference type="Proteomes" id="UP000000808">
    <property type="component" value="Chromosome"/>
</dbReference>
<dbReference type="GO" id="GO:0005829">
    <property type="term" value="C:cytosol"/>
    <property type="evidence" value="ECO:0000314"/>
    <property type="project" value="AgBase"/>
</dbReference>
<dbReference type="GO" id="GO:0009897">
    <property type="term" value="C:external side of plasma membrane"/>
    <property type="evidence" value="ECO:0000314"/>
    <property type="project" value="CAFA"/>
</dbReference>
<dbReference type="GO" id="GO:0016020">
    <property type="term" value="C:membrane"/>
    <property type="evidence" value="ECO:0000314"/>
    <property type="project" value="AgBase"/>
</dbReference>
<dbReference type="GO" id="GO:0001968">
    <property type="term" value="F:fibronectin binding"/>
    <property type="evidence" value="ECO:0000353"/>
    <property type="project" value="CAFA"/>
</dbReference>
<dbReference type="GO" id="GO:0005525">
    <property type="term" value="F:GTP binding"/>
    <property type="evidence" value="ECO:0007669"/>
    <property type="project" value="UniProtKB-UniRule"/>
</dbReference>
<dbReference type="GO" id="GO:0003924">
    <property type="term" value="F:GTPase activity"/>
    <property type="evidence" value="ECO:0007669"/>
    <property type="project" value="InterPro"/>
</dbReference>
<dbReference type="GO" id="GO:0003746">
    <property type="term" value="F:translation elongation factor activity"/>
    <property type="evidence" value="ECO:0007669"/>
    <property type="project" value="UniProtKB-UniRule"/>
</dbReference>
<dbReference type="CDD" id="cd01884">
    <property type="entry name" value="EF_Tu"/>
    <property type="match status" value="1"/>
</dbReference>
<dbReference type="CDD" id="cd03697">
    <property type="entry name" value="EFTU_II"/>
    <property type="match status" value="1"/>
</dbReference>
<dbReference type="CDD" id="cd03707">
    <property type="entry name" value="EFTU_III"/>
    <property type="match status" value="1"/>
</dbReference>
<dbReference type="FunFam" id="2.40.30.10:FF:000001">
    <property type="entry name" value="Elongation factor Tu"/>
    <property type="match status" value="1"/>
</dbReference>
<dbReference type="FunFam" id="3.40.50.300:FF:000003">
    <property type="entry name" value="Elongation factor Tu"/>
    <property type="match status" value="1"/>
</dbReference>
<dbReference type="Gene3D" id="3.40.50.300">
    <property type="entry name" value="P-loop containing nucleotide triphosphate hydrolases"/>
    <property type="match status" value="1"/>
</dbReference>
<dbReference type="Gene3D" id="2.40.30.10">
    <property type="entry name" value="Translation factors"/>
    <property type="match status" value="2"/>
</dbReference>
<dbReference type="HAMAP" id="MF_00118_B">
    <property type="entry name" value="EF_Tu_B"/>
    <property type="match status" value="1"/>
</dbReference>
<dbReference type="InterPro" id="IPR041709">
    <property type="entry name" value="EF-Tu_GTP-bd"/>
</dbReference>
<dbReference type="InterPro" id="IPR050055">
    <property type="entry name" value="EF-Tu_GTPase"/>
</dbReference>
<dbReference type="InterPro" id="IPR004161">
    <property type="entry name" value="EFTu-like_2"/>
</dbReference>
<dbReference type="InterPro" id="IPR033720">
    <property type="entry name" value="EFTU_2"/>
</dbReference>
<dbReference type="InterPro" id="IPR031157">
    <property type="entry name" value="G_TR_CS"/>
</dbReference>
<dbReference type="InterPro" id="IPR027417">
    <property type="entry name" value="P-loop_NTPase"/>
</dbReference>
<dbReference type="InterPro" id="IPR005225">
    <property type="entry name" value="Small_GTP-bd"/>
</dbReference>
<dbReference type="InterPro" id="IPR000795">
    <property type="entry name" value="T_Tr_GTP-bd_dom"/>
</dbReference>
<dbReference type="InterPro" id="IPR009000">
    <property type="entry name" value="Transl_B-barrel_sf"/>
</dbReference>
<dbReference type="InterPro" id="IPR009001">
    <property type="entry name" value="Transl_elong_EF1A/Init_IF2_C"/>
</dbReference>
<dbReference type="InterPro" id="IPR004541">
    <property type="entry name" value="Transl_elong_EFTu/EF1A_bac/org"/>
</dbReference>
<dbReference type="InterPro" id="IPR004160">
    <property type="entry name" value="Transl_elong_EFTu/EF1A_C"/>
</dbReference>
<dbReference type="NCBIfam" id="TIGR00485">
    <property type="entry name" value="EF-Tu"/>
    <property type="match status" value="1"/>
</dbReference>
<dbReference type="NCBIfam" id="NF000766">
    <property type="entry name" value="PRK00049.1"/>
    <property type="match status" value="1"/>
</dbReference>
<dbReference type="NCBIfam" id="NF009372">
    <property type="entry name" value="PRK12735.1"/>
    <property type="match status" value="1"/>
</dbReference>
<dbReference type="NCBIfam" id="NF009373">
    <property type="entry name" value="PRK12736.1"/>
    <property type="match status" value="1"/>
</dbReference>
<dbReference type="NCBIfam" id="TIGR00231">
    <property type="entry name" value="small_GTP"/>
    <property type="match status" value="1"/>
</dbReference>
<dbReference type="PANTHER" id="PTHR43721:SF22">
    <property type="entry name" value="ELONGATION FACTOR TU, MITOCHONDRIAL"/>
    <property type="match status" value="1"/>
</dbReference>
<dbReference type="PANTHER" id="PTHR43721">
    <property type="entry name" value="ELONGATION FACTOR TU-RELATED"/>
    <property type="match status" value="1"/>
</dbReference>
<dbReference type="Pfam" id="PF00009">
    <property type="entry name" value="GTP_EFTU"/>
    <property type="match status" value="1"/>
</dbReference>
<dbReference type="Pfam" id="PF03144">
    <property type="entry name" value="GTP_EFTU_D2"/>
    <property type="match status" value="1"/>
</dbReference>
<dbReference type="Pfam" id="PF03143">
    <property type="entry name" value="GTP_EFTU_D3"/>
    <property type="match status" value="1"/>
</dbReference>
<dbReference type="PRINTS" id="PR00315">
    <property type="entry name" value="ELONGATNFCT"/>
</dbReference>
<dbReference type="SUPFAM" id="SSF50465">
    <property type="entry name" value="EF-Tu/eEF-1alpha/eIF2-gamma C-terminal domain"/>
    <property type="match status" value="1"/>
</dbReference>
<dbReference type="SUPFAM" id="SSF52540">
    <property type="entry name" value="P-loop containing nucleoside triphosphate hydrolases"/>
    <property type="match status" value="1"/>
</dbReference>
<dbReference type="SUPFAM" id="SSF50447">
    <property type="entry name" value="Translation proteins"/>
    <property type="match status" value="1"/>
</dbReference>
<dbReference type="PROSITE" id="PS00301">
    <property type="entry name" value="G_TR_1"/>
    <property type="match status" value="1"/>
</dbReference>
<dbReference type="PROSITE" id="PS51722">
    <property type="entry name" value="G_TR_2"/>
    <property type="match status" value="1"/>
</dbReference>
<reference key="1">
    <citation type="journal article" date="1990" name="Mol. Microbiol.">
        <title>Nucleotide sequence and codon usage of the elongation factor Tu(EF-Tu) gene from Mycoplasma pneumoniae.</title>
        <authorList>
            <person name="Yogev D."/>
            <person name="Sela S."/>
            <person name="Bercovier H."/>
            <person name="Razin S."/>
        </authorList>
    </citation>
    <scope>NUCLEOTIDE SEQUENCE [GENOMIC DNA]</scope>
</reference>
<reference key="2">
    <citation type="journal article" date="1996" name="Nucleic Acids Res.">
        <title>Complete sequence analysis of the genome of the bacterium Mycoplasma pneumoniae.</title>
        <authorList>
            <person name="Himmelreich R."/>
            <person name="Hilbert H."/>
            <person name="Plagens H."/>
            <person name="Pirkl E."/>
            <person name="Li B.-C."/>
            <person name="Herrmann R."/>
        </authorList>
    </citation>
    <scope>NUCLEOTIDE SEQUENCE [LARGE SCALE GENOMIC DNA]</scope>
    <source>
        <strain>ATCC 29342 / M129 / Subtype 1</strain>
    </source>
</reference>
<gene>
    <name evidence="2" type="primary">tuf</name>
    <name type="ordered locus">MPN_665</name>
    <name type="ORF">MP177</name>
</gene>
<proteinExistence type="evidence at protein level"/>
<keyword id="KW-0002">3D-structure</keyword>
<keyword id="KW-0963">Cytoplasm</keyword>
<keyword id="KW-0251">Elongation factor</keyword>
<keyword id="KW-0342">GTP-binding</keyword>
<keyword id="KW-0378">Hydrolase</keyword>
<keyword id="KW-0460">Magnesium</keyword>
<keyword id="KW-0479">Metal-binding</keyword>
<keyword id="KW-0547">Nucleotide-binding</keyword>
<keyword id="KW-0648">Protein biosynthesis</keyword>
<keyword id="KW-1185">Reference proteome</keyword>
<accession>P23568</accession>
<accession>P75126</accession>
<sequence>MAREKFDRSKPHVNVGTIGHIDHGKTTLTAAICTVLAKEGKSAATRYDQIDKAPEEKARGITINSAHVEYSSDKRHYAHVDCPGHADYIKNMITGAAQMDGAILVVSATDSVMPQTREHILLARQVGVPRMVVFLNKCDIATDEEVQELVAEEVRDLLTSYGFDGKNTPIIYGSALKALEGDPKWEAKIHDLMNAVDEWIPTPEREVDKPFLLAIEDTMTITGRGTVVTGRVERGELKVGQEIEIVGLRPIRKAVVTGIEMFKKELDSAMAGDNAGVLLRGVDRKEVERGQVLAKPGSIKPHKKFKAEIYALKKEEGGRHTGFLNGYRPQFYFRTTDVTGSISLPENTEMVLPGDNTSITVELIAPIACEKGSKFSIREGGRTVGAGSVTEVLE</sequence>
<organism>
    <name type="scientific">Mycoplasma pneumoniae (strain ATCC 29342 / M129 / Subtype 1)</name>
    <name type="common">Mycoplasmoides pneumoniae</name>
    <dbReference type="NCBI Taxonomy" id="272634"/>
    <lineage>
        <taxon>Bacteria</taxon>
        <taxon>Bacillati</taxon>
        <taxon>Mycoplasmatota</taxon>
        <taxon>Mycoplasmoidales</taxon>
        <taxon>Mycoplasmoidaceae</taxon>
        <taxon>Mycoplasmoides</taxon>
    </lineage>
</organism>
<comment type="function">
    <text evidence="2">GTP hydrolase that promotes the GTP-dependent binding of aminoacyl-tRNA to the A-site of ribosomes during protein biosynthesis.</text>
</comment>
<comment type="catalytic activity">
    <reaction evidence="2">
        <text>GTP + H2O = GDP + phosphate + H(+)</text>
        <dbReference type="Rhea" id="RHEA:19669"/>
        <dbReference type="ChEBI" id="CHEBI:15377"/>
        <dbReference type="ChEBI" id="CHEBI:15378"/>
        <dbReference type="ChEBI" id="CHEBI:37565"/>
        <dbReference type="ChEBI" id="CHEBI:43474"/>
        <dbReference type="ChEBI" id="CHEBI:58189"/>
        <dbReference type="EC" id="3.6.5.3"/>
    </reaction>
    <physiologicalReaction direction="left-to-right" evidence="2">
        <dbReference type="Rhea" id="RHEA:19670"/>
    </physiologicalReaction>
</comment>
<comment type="subunit">
    <text evidence="2">Monomer.</text>
</comment>
<comment type="interaction">
    <interactant intactId="EBI-2259072">
        <id>P23568</id>
    </interactant>
    <interactant intactId="EBI-1220319">
        <id>P02751</id>
        <label>FN1</label>
    </interactant>
    <organismsDiffer>true</organismsDiffer>
    <experiments>2</experiments>
</comment>
<comment type="subcellular location">
    <subcellularLocation>
        <location evidence="2">Cytoplasm</location>
    </subcellularLocation>
</comment>
<comment type="similarity">
    <text evidence="2">Belongs to the TRAFAC class translation factor GTPase superfamily. Classic translation factor GTPase family. EF-Tu/EF-1A subfamily.</text>
</comment>